<protein>
    <recommendedName>
        <fullName>Signal peptidase I</fullName>
        <shortName>SPase I</shortName>
        <ecNumber>3.4.21.89</ecNumber>
    </recommendedName>
    <alternativeName>
        <fullName>Leader peptidase I</fullName>
    </alternativeName>
</protein>
<dbReference type="EC" id="3.4.21.89"/>
<dbReference type="EMBL" id="AL123456">
    <property type="protein sequence ID" value="CCP45705.1"/>
    <property type="molecule type" value="Genomic_DNA"/>
</dbReference>
<dbReference type="PIR" id="B70927">
    <property type="entry name" value="B70927"/>
</dbReference>
<dbReference type="RefSeq" id="NP_217419.1">
    <property type="nucleotide sequence ID" value="NC_000962.3"/>
</dbReference>
<dbReference type="RefSeq" id="WP_003414715.1">
    <property type="nucleotide sequence ID" value="NZ_NVQJ01000006.1"/>
</dbReference>
<dbReference type="SMR" id="P9WKA1"/>
<dbReference type="FunCoup" id="P9WKA1">
    <property type="interactions" value="137"/>
</dbReference>
<dbReference type="STRING" id="83332.Rv2903c"/>
<dbReference type="MEROPS" id="S26.024"/>
<dbReference type="PaxDb" id="83332-Rv2903c"/>
<dbReference type="DNASU" id="887157"/>
<dbReference type="GeneID" id="45426890"/>
<dbReference type="GeneID" id="887157"/>
<dbReference type="KEGG" id="mtu:Rv2903c"/>
<dbReference type="KEGG" id="mtv:RVBD_2903c"/>
<dbReference type="TubercuList" id="Rv2903c"/>
<dbReference type="eggNOG" id="COG0681">
    <property type="taxonomic scope" value="Bacteria"/>
</dbReference>
<dbReference type="InParanoid" id="P9WKA1"/>
<dbReference type="OrthoDB" id="9815782at2"/>
<dbReference type="PhylomeDB" id="P9WKA1"/>
<dbReference type="BRENDA" id="3.4.21.89">
    <property type="organism ID" value="3445"/>
</dbReference>
<dbReference type="BRENDA" id="3.4.22.46">
    <property type="organism ID" value="3445"/>
</dbReference>
<dbReference type="Proteomes" id="UP000001584">
    <property type="component" value="Chromosome"/>
</dbReference>
<dbReference type="GO" id="GO:0005886">
    <property type="term" value="C:plasma membrane"/>
    <property type="evidence" value="ECO:0007005"/>
    <property type="project" value="MTBBASE"/>
</dbReference>
<dbReference type="GO" id="GO:0004252">
    <property type="term" value="F:serine-type endopeptidase activity"/>
    <property type="evidence" value="ECO:0000318"/>
    <property type="project" value="GO_Central"/>
</dbReference>
<dbReference type="GO" id="GO:0006465">
    <property type="term" value="P:signal peptide processing"/>
    <property type="evidence" value="ECO:0000318"/>
    <property type="project" value="GO_Central"/>
</dbReference>
<dbReference type="CDD" id="cd06530">
    <property type="entry name" value="S26_SPase_I"/>
    <property type="match status" value="1"/>
</dbReference>
<dbReference type="Gene3D" id="2.10.109.10">
    <property type="entry name" value="Umud Fragment, subunit A"/>
    <property type="match status" value="1"/>
</dbReference>
<dbReference type="InterPro" id="IPR036286">
    <property type="entry name" value="LexA/Signal_pep-like_sf"/>
</dbReference>
<dbReference type="InterPro" id="IPR000223">
    <property type="entry name" value="Pept_S26A_signal_pept_1"/>
</dbReference>
<dbReference type="InterPro" id="IPR019758">
    <property type="entry name" value="Pept_S26A_signal_pept_1_CS"/>
</dbReference>
<dbReference type="InterPro" id="IPR019756">
    <property type="entry name" value="Pept_S26A_signal_pept_1_Ser-AS"/>
</dbReference>
<dbReference type="InterPro" id="IPR019533">
    <property type="entry name" value="Peptidase_S26"/>
</dbReference>
<dbReference type="NCBIfam" id="TIGR02227">
    <property type="entry name" value="sigpep_I_bact"/>
    <property type="match status" value="1"/>
</dbReference>
<dbReference type="PANTHER" id="PTHR43390:SF1">
    <property type="entry name" value="CHLOROPLAST PROCESSING PEPTIDASE"/>
    <property type="match status" value="1"/>
</dbReference>
<dbReference type="PANTHER" id="PTHR43390">
    <property type="entry name" value="SIGNAL PEPTIDASE I"/>
    <property type="match status" value="1"/>
</dbReference>
<dbReference type="Pfam" id="PF10502">
    <property type="entry name" value="Peptidase_S26"/>
    <property type="match status" value="1"/>
</dbReference>
<dbReference type="PRINTS" id="PR00727">
    <property type="entry name" value="LEADERPTASE"/>
</dbReference>
<dbReference type="SUPFAM" id="SSF51306">
    <property type="entry name" value="LexA/Signal peptidase"/>
    <property type="match status" value="1"/>
</dbReference>
<dbReference type="PROSITE" id="PS00501">
    <property type="entry name" value="SPASE_I_1"/>
    <property type="match status" value="1"/>
</dbReference>
<dbReference type="PROSITE" id="PS00761">
    <property type="entry name" value="SPASE_I_3"/>
    <property type="match status" value="1"/>
</dbReference>
<sequence>MTETTDSPSERQPGPAEPELSSRDPDIAGQVFDAAPFDAAPDADSEGDSKAAKTDEPRPAKRSTLREFAVLAVIAVVLYYVMLTFVARPYLIPSESMEPTLHGCSTCVGDRIMVDKLSYRFGSPQPGDVIVFRGPPSWNVGYKSIRSHNVAVRWVQNALSFIGFVPPDENDLVKRVIAVGGQTVQCRSDTGLTVNGRPLKEPYLDPATMMADPSIYPCLGSEFGPVTVPPGRVWVMGDNRTHSADSRAHCPLLCTDDPLPGTVPVANVIGKARLIVWPPSRWGVVRSVNPQQGR</sequence>
<organism>
    <name type="scientific">Mycobacterium tuberculosis (strain ATCC 25618 / H37Rv)</name>
    <dbReference type="NCBI Taxonomy" id="83332"/>
    <lineage>
        <taxon>Bacteria</taxon>
        <taxon>Bacillati</taxon>
        <taxon>Actinomycetota</taxon>
        <taxon>Actinomycetes</taxon>
        <taxon>Mycobacteriales</taxon>
        <taxon>Mycobacteriaceae</taxon>
        <taxon>Mycobacterium</taxon>
        <taxon>Mycobacterium tuberculosis complex</taxon>
    </lineage>
</organism>
<keyword id="KW-1003">Cell membrane</keyword>
<keyword id="KW-0378">Hydrolase</keyword>
<keyword id="KW-0472">Membrane</keyword>
<keyword id="KW-0645">Protease</keyword>
<keyword id="KW-1185">Reference proteome</keyword>
<keyword id="KW-0812">Transmembrane</keyword>
<keyword id="KW-1133">Transmembrane helix</keyword>
<reference key="1">
    <citation type="journal article" date="1998" name="Nature">
        <title>Deciphering the biology of Mycobacterium tuberculosis from the complete genome sequence.</title>
        <authorList>
            <person name="Cole S.T."/>
            <person name="Brosch R."/>
            <person name="Parkhill J."/>
            <person name="Garnier T."/>
            <person name="Churcher C.M."/>
            <person name="Harris D.E."/>
            <person name="Gordon S.V."/>
            <person name="Eiglmeier K."/>
            <person name="Gas S."/>
            <person name="Barry C.E. III"/>
            <person name="Tekaia F."/>
            <person name="Badcock K."/>
            <person name="Basham D."/>
            <person name="Brown D."/>
            <person name="Chillingworth T."/>
            <person name="Connor R."/>
            <person name="Davies R.M."/>
            <person name="Devlin K."/>
            <person name="Feltwell T."/>
            <person name="Gentles S."/>
            <person name="Hamlin N."/>
            <person name="Holroyd S."/>
            <person name="Hornsby T."/>
            <person name="Jagels K."/>
            <person name="Krogh A."/>
            <person name="McLean J."/>
            <person name="Moule S."/>
            <person name="Murphy L.D."/>
            <person name="Oliver S."/>
            <person name="Osborne J."/>
            <person name="Quail M.A."/>
            <person name="Rajandream M.A."/>
            <person name="Rogers J."/>
            <person name="Rutter S."/>
            <person name="Seeger K."/>
            <person name="Skelton S."/>
            <person name="Squares S."/>
            <person name="Squares R."/>
            <person name="Sulston J.E."/>
            <person name="Taylor K."/>
            <person name="Whitehead S."/>
            <person name="Barrell B.G."/>
        </authorList>
    </citation>
    <scope>NUCLEOTIDE SEQUENCE [LARGE SCALE GENOMIC DNA]</scope>
    <source>
        <strain>ATCC 25618 / H37Rv</strain>
    </source>
</reference>
<reference key="2">
    <citation type="journal article" date="2008" name="BMC Syst. Biol.">
        <title>targetTB: a target identification pipeline for Mycobacterium tuberculosis through an interactome, reactome and genome-scale structural analysis.</title>
        <authorList>
            <person name="Raman K."/>
            <person name="Yeturu K."/>
            <person name="Chandra N."/>
        </authorList>
    </citation>
    <scope>IDENTIFICATION AS A DRUG TARGET [LARGE SCALE ANALYSIS]</scope>
</reference>
<reference key="3">
    <citation type="journal article" date="2011" name="Mol. Cell. Proteomics">
        <title>Proteogenomic analysis of Mycobacterium tuberculosis by high resolution mass spectrometry.</title>
        <authorList>
            <person name="Kelkar D.S."/>
            <person name="Kumar D."/>
            <person name="Kumar P."/>
            <person name="Balakrishnan L."/>
            <person name="Muthusamy B."/>
            <person name="Yadav A.K."/>
            <person name="Shrivastava P."/>
            <person name="Marimuthu A."/>
            <person name="Anand S."/>
            <person name="Sundaram H."/>
            <person name="Kingsbury R."/>
            <person name="Harsha H.C."/>
            <person name="Nair B."/>
            <person name="Prasad T.S."/>
            <person name="Chauhan D.S."/>
            <person name="Katoch K."/>
            <person name="Katoch V.M."/>
            <person name="Kumar P."/>
            <person name="Chaerkady R."/>
            <person name="Ramachandran S."/>
            <person name="Dash D."/>
            <person name="Pandey A."/>
        </authorList>
    </citation>
    <scope>IDENTIFICATION BY MASS SPECTROMETRY [LARGE SCALE ANALYSIS]</scope>
    <source>
        <strain>ATCC 25618 / H37Rv</strain>
    </source>
</reference>
<reference key="4">
    <citation type="journal article" date="2012" name="J. Bacteriol.">
        <title>Inhibition of the sole type I signal peptidase of Mycobacterium tuberculosis is bactericidal under replicating and nonreplicating conditions.</title>
        <authorList>
            <person name="Ollinger J."/>
            <person name="O'Malley T."/>
            <person name="Ahn J."/>
            <person name="Odingo J."/>
            <person name="Parish T."/>
        </authorList>
    </citation>
    <scope>CATALYTIC ACTIVITY</scope>
    <scope>ACTIVITY REGULATION</scope>
</reference>
<comment type="catalytic activity">
    <reaction evidence="4">
        <text>Cleavage of hydrophobic, N-terminal signal or leader sequences from secreted and periplasmic proteins.</text>
        <dbReference type="EC" id="3.4.21.89"/>
    </reaction>
</comment>
<comment type="activity regulation">
    <text evidence="4">Inhibited by 1-(2,5-dichlorophenyl)-3-(dimethylamino)propan-1-one (MD3).</text>
</comment>
<comment type="subcellular location">
    <subcellularLocation>
        <location evidence="1">Cell membrane</location>
        <topology evidence="1">Single-pass type II membrane protein</topology>
    </subcellularLocation>
</comment>
<comment type="miscellaneous">
    <text>Was identified as a high-confidence drug target.</text>
</comment>
<comment type="similarity">
    <text evidence="5">Belongs to the peptidase S26 family.</text>
</comment>
<gene>
    <name type="primary">lepB</name>
    <name type="ordered locus">Rv2903c</name>
    <name type="ORF">MTCY274.34c</name>
</gene>
<evidence type="ECO:0000250" key="1"/>
<evidence type="ECO:0000255" key="2"/>
<evidence type="ECO:0000256" key="3">
    <source>
        <dbReference type="SAM" id="MobiDB-lite"/>
    </source>
</evidence>
<evidence type="ECO:0000269" key="4">
    <source>
    </source>
</evidence>
<evidence type="ECO:0000305" key="5"/>
<feature type="chain" id="PRO_0000109511" description="Signal peptidase I">
    <location>
        <begin position="1"/>
        <end position="294"/>
    </location>
</feature>
<feature type="topological domain" description="Cytoplasmic" evidence="2">
    <location>
        <begin position="1"/>
        <end position="66"/>
    </location>
</feature>
<feature type="transmembrane region" description="Helical" evidence="2">
    <location>
        <begin position="67"/>
        <end position="87"/>
    </location>
</feature>
<feature type="topological domain" description="Extracellular" evidence="2">
    <location>
        <begin position="88"/>
        <end position="294"/>
    </location>
</feature>
<feature type="region of interest" description="Disordered" evidence="3">
    <location>
        <begin position="1"/>
        <end position="59"/>
    </location>
</feature>
<feature type="compositionally biased region" description="Basic and acidic residues" evidence="3">
    <location>
        <begin position="47"/>
        <end position="59"/>
    </location>
</feature>
<feature type="active site" evidence="5">
    <location>
        <position position="96"/>
    </location>
</feature>
<feature type="active site" evidence="5">
    <location>
        <position position="174"/>
    </location>
</feature>
<name>LEP_MYCTU</name>
<accession>P9WKA1</accession>
<accession>L0TAZ5</accession>
<accession>Q10789</accession>
<proteinExistence type="evidence at protein level"/>